<evidence type="ECO:0000250" key="1">
    <source>
        <dbReference type="UniProtKB" id="Q8L9J7"/>
    </source>
</evidence>
<evidence type="ECO:0000255" key="2"/>
<evidence type="ECO:0000305" key="3"/>
<feature type="chain" id="PRO_0000404122" description="Bidirectional sugar transporter SWEET3a">
    <location>
        <begin position="1"/>
        <end position="246"/>
    </location>
</feature>
<feature type="topological domain" description="Extracellular" evidence="2">
    <location>
        <begin position="1"/>
        <end position="6"/>
    </location>
</feature>
<feature type="transmembrane region" description="Helical; Name=1" evidence="2">
    <location>
        <begin position="7"/>
        <end position="27"/>
    </location>
</feature>
<feature type="topological domain" description="Cytoplasmic" evidence="2">
    <location>
        <begin position="28"/>
        <end position="42"/>
    </location>
</feature>
<feature type="transmembrane region" description="Helical; Name=2" evidence="2">
    <location>
        <begin position="43"/>
        <end position="63"/>
    </location>
</feature>
<feature type="topological domain" description="Extracellular" evidence="2">
    <location>
        <begin position="64"/>
        <end position="74"/>
    </location>
</feature>
<feature type="transmembrane region" description="Helical; Name=3" evidence="2">
    <location>
        <begin position="75"/>
        <end position="95"/>
    </location>
</feature>
<feature type="topological domain" description="Cytoplasmic" evidence="2">
    <location>
        <begin position="96"/>
        <end position="101"/>
    </location>
</feature>
<feature type="transmembrane region" description="Helical; Name=4" evidence="2">
    <location>
        <begin position="102"/>
        <end position="122"/>
    </location>
</feature>
<feature type="topological domain" description="Extracellular" evidence="2">
    <location>
        <begin position="123"/>
        <end position="131"/>
    </location>
</feature>
<feature type="transmembrane region" description="Helical; Name=5" evidence="2">
    <location>
        <begin position="132"/>
        <end position="152"/>
    </location>
</feature>
<feature type="topological domain" description="Cytoplasmic" evidence="2">
    <location>
        <begin position="153"/>
        <end position="166"/>
    </location>
</feature>
<feature type="transmembrane region" description="Helical; Name=6" evidence="2">
    <location>
        <begin position="167"/>
        <end position="187"/>
    </location>
</feature>
<feature type="topological domain" description="Extracellular" evidence="2">
    <location>
        <begin position="188"/>
        <end position="191"/>
    </location>
</feature>
<feature type="transmembrane region" description="Helical; Name=7" evidence="2">
    <location>
        <begin position="192"/>
        <end position="212"/>
    </location>
</feature>
<feature type="topological domain" description="Cytoplasmic" evidence="2">
    <location>
        <begin position="213"/>
        <end position="246"/>
    </location>
</feature>
<feature type="domain" description="MtN3/slv 1">
    <location>
        <begin position="7"/>
        <end position="96"/>
    </location>
</feature>
<feature type="domain" description="MtN3/slv 2">
    <location>
        <begin position="133"/>
        <end position="217"/>
    </location>
</feature>
<feature type="glycosylation site" description="N-linked (GlcNAc...) asparagine" evidence="2">
    <location>
        <position position="69"/>
    </location>
</feature>
<keyword id="KW-1003">Cell membrane</keyword>
<keyword id="KW-0325">Glycoprotein</keyword>
<keyword id="KW-0472">Membrane</keyword>
<keyword id="KW-1185">Reference proteome</keyword>
<keyword id="KW-0677">Repeat</keyword>
<keyword id="KW-0762">Sugar transport</keyword>
<keyword id="KW-0812">Transmembrane</keyword>
<keyword id="KW-1133">Transmembrane helix</keyword>
<keyword id="KW-0813">Transport</keyword>
<sequence>MFPDIRFIVGIIGSVACMLLYSAPILTFKRVIKKASVEEFSCIPYILALFSCLTYSWYGFPVVSYGWENMTVCSISSLGVLFEGTFISIYVWFAPRGKKKQVMLMASLILAVFCMTVFFSSFSIHNHHIRKVFVGSVGLVSSISMYGSPLVAMKQVIRTKSVEFMPFYLSLFTLFTSLTWMAYGVIGRDPFIATPNCIGSIMGILQLVVYCIYSKCKEAPKVLHDIEQANVVKIPTSHVDTKGHNP</sequence>
<dbReference type="EMBL" id="AP008211">
    <property type="protein sequence ID" value="BAF16840.1"/>
    <property type="status" value="ALT_SEQ"/>
    <property type="molecule type" value="Genomic_DNA"/>
</dbReference>
<dbReference type="EMBL" id="AP014961">
    <property type="status" value="NOT_ANNOTATED_CDS"/>
    <property type="molecule type" value="Genomic_DNA"/>
</dbReference>
<dbReference type="EMBL" id="CM000142">
    <property type="protein sequence ID" value="EEE62748.1"/>
    <property type="status" value="ALT_SEQ"/>
    <property type="molecule type" value="Genomic_DNA"/>
</dbReference>
<dbReference type="RefSeq" id="XP_015638481.1">
    <property type="nucleotide sequence ID" value="XM_015782995.1"/>
</dbReference>
<dbReference type="SMR" id="Q0DJY3"/>
<dbReference type="FunCoup" id="Q0DJY3">
    <property type="interactions" value="21"/>
</dbReference>
<dbReference type="STRING" id="39947.Q0DJY3"/>
<dbReference type="GlyCosmos" id="Q0DJY3">
    <property type="glycosylation" value="1 site, No reported glycans"/>
</dbReference>
<dbReference type="PaxDb" id="39947-Q0DJY3"/>
<dbReference type="EnsemblPlants" id="Os05t0214300-01">
    <property type="protein sequence ID" value="Os05t0214300-01"/>
    <property type="gene ID" value="Os05g0214300"/>
</dbReference>
<dbReference type="Gramene" id="Os05t0214300-01">
    <property type="protein sequence ID" value="Os05t0214300-01"/>
    <property type="gene ID" value="Os05g0214300"/>
</dbReference>
<dbReference type="KEGG" id="dosa:Os05g0214300"/>
<dbReference type="eggNOG" id="KOG1623">
    <property type="taxonomic scope" value="Eukaryota"/>
</dbReference>
<dbReference type="HOGENOM" id="CLU_048643_1_0_1"/>
<dbReference type="InParanoid" id="Q0DJY3"/>
<dbReference type="OrthoDB" id="409725at2759"/>
<dbReference type="Proteomes" id="UP000000763">
    <property type="component" value="Chromosome 5"/>
</dbReference>
<dbReference type="Proteomes" id="UP000007752">
    <property type="component" value="Chromosome 5"/>
</dbReference>
<dbReference type="Proteomes" id="UP000059680">
    <property type="component" value="Chromosome 5"/>
</dbReference>
<dbReference type="GO" id="GO:0016020">
    <property type="term" value="C:membrane"/>
    <property type="evidence" value="ECO:0000318"/>
    <property type="project" value="GO_Central"/>
</dbReference>
<dbReference type="GO" id="GO:0005886">
    <property type="term" value="C:plasma membrane"/>
    <property type="evidence" value="ECO:0000250"/>
    <property type="project" value="UniProtKB"/>
</dbReference>
<dbReference type="GO" id="GO:0051119">
    <property type="term" value="F:sugar transmembrane transporter activity"/>
    <property type="evidence" value="ECO:0000250"/>
    <property type="project" value="UniProtKB"/>
</dbReference>
<dbReference type="GO" id="GO:0008643">
    <property type="term" value="P:carbohydrate transport"/>
    <property type="evidence" value="ECO:0000318"/>
    <property type="project" value="GO_Central"/>
</dbReference>
<dbReference type="FunFam" id="1.20.1280.290:FF:000001">
    <property type="entry name" value="Bidirectional sugar transporter SWEET"/>
    <property type="match status" value="1"/>
</dbReference>
<dbReference type="FunFam" id="1.20.1280.290:FF:000002">
    <property type="entry name" value="Bidirectional sugar transporter SWEET"/>
    <property type="match status" value="1"/>
</dbReference>
<dbReference type="Gene3D" id="1.20.1280.290">
    <property type="match status" value="2"/>
</dbReference>
<dbReference type="InterPro" id="IPR047664">
    <property type="entry name" value="SWEET"/>
</dbReference>
<dbReference type="InterPro" id="IPR004316">
    <property type="entry name" value="SWEET_rpt"/>
</dbReference>
<dbReference type="PANTHER" id="PTHR10791:SF58">
    <property type="entry name" value="BIDIRECTIONAL SUGAR TRANSPORTER SWEET3A"/>
    <property type="match status" value="1"/>
</dbReference>
<dbReference type="PANTHER" id="PTHR10791">
    <property type="entry name" value="RAG1-ACTIVATING PROTEIN 1"/>
    <property type="match status" value="1"/>
</dbReference>
<dbReference type="Pfam" id="PF03083">
    <property type="entry name" value="MtN3_slv"/>
    <property type="match status" value="2"/>
</dbReference>
<proteinExistence type="inferred from homology"/>
<reference key="1">
    <citation type="journal article" date="2005" name="Nature">
        <title>The map-based sequence of the rice genome.</title>
        <authorList>
            <consortium name="International rice genome sequencing project (IRGSP)"/>
        </authorList>
    </citation>
    <scope>NUCLEOTIDE SEQUENCE [LARGE SCALE GENOMIC DNA]</scope>
    <source>
        <strain>cv. Nipponbare</strain>
    </source>
</reference>
<reference key="2">
    <citation type="journal article" date="2008" name="Nucleic Acids Res.">
        <title>The rice annotation project database (RAP-DB): 2008 update.</title>
        <authorList>
            <consortium name="The rice annotation project (RAP)"/>
        </authorList>
    </citation>
    <scope>GENOME REANNOTATION</scope>
    <source>
        <strain>cv. Nipponbare</strain>
    </source>
</reference>
<reference key="3">
    <citation type="journal article" date="2013" name="Rice">
        <title>Improvement of the Oryza sativa Nipponbare reference genome using next generation sequence and optical map data.</title>
        <authorList>
            <person name="Kawahara Y."/>
            <person name="de la Bastide M."/>
            <person name="Hamilton J.P."/>
            <person name="Kanamori H."/>
            <person name="McCombie W.R."/>
            <person name="Ouyang S."/>
            <person name="Schwartz D.C."/>
            <person name="Tanaka T."/>
            <person name="Wu J."/>
            <person name="Zhou S."/>
            <person name="Childs K.L."/>
            <person name="Davidson R.M."/>
            <person name="Lin H."/>
            <person name="Quesada-Ocampo L."/>
            <person name="Vaillancourt B."/>
            <person name="Sakai H."/>
            <person name="Lee S.S."/>
            <person name="Kim J."/>
            <person name="Numa H."/>
            <person name="Itoh T."/>
            <person name="Buell C.R."/>
            <person name="Matsumoto T."/>
        </authorList>
    </citation>
    <scope>GENOME REANNOTATION</scope>
    <source>
        <strain>cv. Nipponbare</strain>
    </source>
</reference>
<reference key="4">
    <citation type="journal article" date="2005" name="PLoS Biol.">
        <title>The genomes of Oryza sativa: a history of duplications.</title>
        <authorList>
            <person name="Yu J."/>
            <person name="Wang J."/>
            <person name="Lin W."/>
            <person name="Li S."/>
            <person name="Li H."/>
            <person name="Zhou J."/>
            <person name="Ni P."/>
            <person name="Dong W."/>
            <person name="Hu S."/>
            <person name="Zeng C."/>
            <person name="Zhang J."/>
            <person name="Zhang Y."/>
            <person name="Li R."/>
            <person name="Xu Z."/>
            <person name="Li S."/>
            <person name="Li X."/>
            <person name="Zheng H."/>
            <person name="Cong L."/>
            <person name="Lin L."/>
            <person name="Yin J."/>
            <person name="Geng J."/>
            <person name="Li G."/>
            <person name="Shi J."/>
            <person name="Liu J."/>
            <person name="Lv H."/>
            <person name="Li J."/>
            <person name="Wang J."/>
            <person name="Deng Y."/>
            <person name="Ran L."/>
            <person name="Shi X."/>
            <person name="Wang X."/>
            <person name="Wu Q."/>
            <person name="Li C."/>
            <person name="Ren X."/>
            <person name="Wang J."/>
            <person name="Wang X."/>
            <person name="Li D."/>
            <person name="Liu D."/>
            <person name="Zhang X."/>
            <person name="Ji Z."/>
            <person name="Zhao W."/>
            <person name="Sun Y."/>
            <person name="Zhang Z."/>
            <person name="Bao J."/>
            <person name="Han Y."/>
            <person name="Dong L."/>
            <person name="Ji J."/>
            <person name="Chen P."/>
            <person name="Wu S."/>
            <person name="Liu J."/>
            <person name="Xiao Y."/>
            <person name="Bu D."/>
            <person name="Tan J."/>
            <person name="Yang L."/>
            <person name="Ye C."/>
            <person name="Zhang J."/>
            <person name="Xu J."/>
            <person name="Zhou Y."/>
            <person name="Yu Y."/>
            <person name="Zhang B."/>
            <person name="Zhuang S."/>
            <person name="Wei H."/>
            <person name="Liu B."/>
            <person name="Lei M."/>
            <person name="Yu H."/>
            <person name="Li Y."/>
            <person name="Xu H."/>
            <person name="Wei S."/>
            <person name="He X."/>
            <person name="Fang L."/>
            <person name="Zhang Z."/>
            <person name="Zhang Y."/>
            <person name="Huang X."/>
            <person name="Su Z."/>
            <person name="Tong W."/>
            <person name="Li J."/>
            <person name="Tong Z."/>
            <person name="Li S."/>
            <person name="Ye J."/>
            <person name="Wang L."/>
            <person name="Fang L."/>
            <person name="Lei T."/>
            <person name="Chen C.-S."/>
            <person name="Chen H.-C."/>
            <person name="Xu Z."/>
            <person name="Li H."/>
            <person name="Huang H."/>
            <person name="Zhang F."/>
            <person name="Xu H."/>
            <person name="Li N."/>
            <person name="Zhao C."/>
            <person name="Li S."/>
            <person name="Dong L."/>
            <person name="Huang Y."/>
            <person name="Li L."/>
            <person name="Xi Y."/>
            <person name="Qi Q."/>
            <person name="Li W."/>
            <person name="Zhang B."/>
            <person name="Hu W."/>
            <person name="Zhang Y."/>
            <person name="Tian X."/>
            <person name="Jiao Y."/>
            <person name="Liang X."/>
            <person name="Jin J."/>
            <person name="Gao L."/>
            <person name="Zheng W."/>
            <person name="Hao B."/>
            <person name="Liu S.-M."/>
            <person name="Wang W."/>
            <person name="Yuan L."/>
            <person name="Cao M."/>
            <person name="McDermott J."/>
            <person name="Samudrala R."/>
            <person name="Wang J."/>
            <person name="Wong G.K.-S."/>
            <person name="Yang H."/>
        </authorList>
    </citation>
    <scope>NUCLEOTIDE SEQUENCE [LARGE SCALE GENOMIC DNA]</scope>
    <source>
        <strain>cv. Nipponbare</strain>
    </source>
</reference>
<reference key="5">
    <citation type="journal article" date="2010" name="Nature">
        <title>Sugar transporters for intercellular exchange and nutrition of pathogens.</title>
        <authorList>
            <person name="Chen L.-Q."/>
            <person name="Hou B.-H."/>
            <person name="Lalonde S."/>
            <person name="Takanaga H."/>
            <person name="Hartung M.L."/>
            <person name="Qu X.-Q."/>
            <person name="Guo W.-J."/>
            <person name="Kim J.-G."/>
            <person name="Underwood W."/>
            <person name="Chaudhuri B."/>
            <person name="Chermak D."/>
            <person name="Antony G."/>
            <person name="White F.F."/>
            <person name="Somerville S.C."/>
            <person name="Mudgett M.B."/>
            <person name="Frommer W.B."/>
        </authorList>
    </citation>
    <scope>GENE FAMILY</scope>
    <scope>NOMENCLATURE</scope>
</reference>
<gene>
    <name type="primary">SWEET3A</name>
    <name type="ordered locus">Os05g0214300</name>
    <name type="ordered locus">LOC_Os05g12320</name>
    <name type="ORF">OsJ_17551</name>
</gene>
<protein>
    <recommendedName>
        <fullName>Bidirectional sugar transporter SWEET3a</fullName>
        <shortName>OsSWEET3a</shortName>
    </recommendedName>
</protein>
<comment type="function">
    <text evidence="1">Mediates both low-affinity uptake and efflux of sugar across the plasma membrane.</text>
</comment>
<comment type="subunit">
    <text evidence="1">Forms homooligomers and/or heterooligomers.</text>
</comment>
<comment type="subcellular location">
    <subcellularLocation>
        <location evidence="1">Cell membrane</location>
        <topology evidence="1">Multi-pass membrane protein</topology>
    </subcellularLocation>
</comment>
<comment type="similarity">
    <text evidence="3">Belongs to the SWEET sugar transporter family.</text>
</comment>
<comment type="sequence caution" evidence="3">
    <conflict type="erroneous gene model prediction">
        <sequence resource="EMBL-CDS" id="BAF16840"/>
    </conflict>
</comment>
<comment type="sequence caution" evidence="3">
    <conflict type="erroneous gene model prediction">
        <sequence resource="EMBL-CDS" id="EEE62748"/>
    </conflict>
</comment>
<name>SWT3A_ORYSJ</name>
<organism>
    <name type="scientific">Oryza sativa subsp. japonica</name>
    <name type="common">Rice</name>
    <dbReference type="NCBI Taxonomy" id="39947"/>
    <lineage>
        <taxon>Eukaryota</taxon>
        <taxon>Viridiplantae</taxon>
        <taxon>Streptophyta</taxon>
        <taxon>Embryophyta</taxon>
        <taxon>Tracheophyta</taxon>
        <taxon>Spermatophyta</taxon>
        <taxon>Magnoliopsida</taxon>
        <taxon>Liliopsida</taxon>
        <taxon>Poales</taxon>
        <taxon>Poaceae</taxon>
        <taxon>BOP clade</taxon>
        <taxon>Oryzoideae</taxon>
        <taxon>Oryzeae</taxon>
        <taxon>Oryzinae</taxon>
        <taxon>Oryza</taxon>
        <taxon>Oryza sativa</taxon>
    </lineage>
</organism>
<accession>Q0DJY3</accession>
<accession>B9FN41</accession>